<gene>
    <name type="primary">fruK</name>
    <name type="ordered locus">MG063</name>
</gene>
<protein>
    <recommendedName>
        <fullName evidence="2">Putative 1-phosphofructokinase</fullName>
        <ecNumber evidence="2">2.7.1.56</ecNumber>
    </recommendedName>
    <alternativeName>
        <fullName evidence="2">Fructose 1-phosphate kinase</fullName>
        <shortName evidence="2">Fru1PK</shortName>
    </alternativeName>
</protein>
<sequence length="303" mass="33922">MTWLQNITKESKIWIVNYACAIDYYVDLNKQKNSVLIPGGKGINVAIVMKSLGFDPTVITFLGQPTKNLFLELVKPYDLNIVSFISETKTRINLKLLKDEKTTEINDLSPLITDANLTELLTFLKANVKNNDLVIINGRFKFEALEKVLNLVFTLTENVVIDVDESKMLTLLNQSKPLVMKPNIDEFQTMINTFFHDQQSLIAAIKKFHYCKLLLLSDGDKGAYLFDQNKLLFVSSITPKQVVSTTGAGDTLLAVFLANLILKVDLKTALIKATNYASATISKLGVVDSKDKISVITPKSYYL</sequence>
<organism>
    <name type="scientific">Mycoplasma genitalium (strain ATCC 33530 / DSM 19775 / NCTC 10195 / G37)</name>
    <name type="common">Mycoplasmoides genitalium</name>
    <dbReference type="NCBI Taxonomy" id="243273"/>
    <lineage>
        <taxon>Bacteria</taxon>
        <taxon>Bacillati</taxon>
        <taxon>Mycoplasmatota</taxon>
        <taxon>Mycoplasmoidales</taxon>
        <taxon>Mycoplasmoidaceae</taxon>
        <taxon>Mycoplasmoides</taxon>
    </lineage>
</organism>
<accession>Q49396</accession>
<accession>Q49226</accession>
<name>K1PF_MYCGE</name>
<evidence type="ECO:0000250" key="1">
    <source>
        <dbReference type="UniProtKB" id="P0A9J6"/>
    </source>
</evidence>
<evidence type="ECO:0000250" key="2">
    <source>
        <dbReference type="UniProtKB" id="P0AEW9"/>
    </source>
</evidence>
<evidence type="ECO:0000269" key="3">
    <source>
    </source>
</evidence>
<evidence type="ECO:0000305" key="4"/>
<comment type="function">
    <text evidence="2">Catalyzes the ATP-dependent phosphorylation of fructose-l-phosphate to fructose-l,6-bisphosphate.</text>
</comment>
<comment type="catalytic activity">
    <reaction evidence="2">
        <text>beta-D-fructose 1-phosphate + ATP = beta-D-fructose 1,6-bisphosphate + ADP + H(+)</text>
        <dbReference type="Rhea" id="RHEA:14213"/>
        <dbReference type="ChEBI" id="CHEBI:15378"/>
        <dbReference type="ChEBI" id="CHEBI:30616"/>
        <dbReference type="ChEBI" id="CHEBI:32966"/>
        <dbReference type="ChEBI" id="CHEBI:138881"/>
        <dbReference type="ChEBI" id="CHEBI:456216"/>
        <dbReference type="EC" id="2.7.1.56"/>
    </reaction>
</comment>
<comment type="disruption phenotype">
    <text evidence="3">Not essential, it can be deleted.</text>
</comment>
<comment type="similarity">
    <text evidence="4">Belongs to the carbohydrate kinase PfkB family.</text>
</comment>
<keyword id="KW-0067">ATP-binding</keyword>
<keyword id="KW-0418">Kinase</keyword>
<keyword id="KW-0547">Nucleotide-binding</keyword>
<keyword id="KW-1185">Reference proteome</keyword>
<keyword id="KW-0808">Transferase</keyword>
<feature type="chain" id="PRO_0000080068" description="Putative 1-phosphofructokinase">
    <location>
        <begin position="1"/>
        <end position="303"/>
    </location>
</feature>
<feature type="active site" description="Proton acceptor" evidence="1">
    <location>
        <position position="250"/>
    </location>
</feature>
<feature type="binding site" evidence="1">
    <location>
        <begin position="217"/>
        <end position="222"/>
    </location>
    <ligand>
        <name>ATP</name>
        <dbReference type="ChEBI" id="CHEBI:30616"/>
    </ligand>
</feature>
<feature type="binding site" evidence="1">
    <location>
        <begin position="249"/>
        <end position="250"/>
    </location>
    <ligand>
        <name>ATP</name>
        <dbReference type="ChEBI" id="CHEBI:30616"/>
    </ligand>
</feature>
<reference key="1">
    <citation type="journal article" date="1995" name="Science">
        <title>The minimal gene complement of Mycoplasma genitalium.</title>
        <authorList>
            <person name="Fraser C.M."/>
            <person name="Gocayne J.D."/>
            <person name="White O."/>
            <person name="Adams M.D."/>
            <person name="Clayton R.A."/>
            <person name="Fleischmann R.D."/>
            <person name="Bult C.J."/>
            <person name="Kerlavage A.R."/>
            <person name="Sutton G.G."/>
            <person name="Kelley J.M."/>
            <person name="Fritchman J.L."/>
            <person name="Weidman J.F."/>
            <person name="Small K.V."/>
            <person name="Sandusky M."/>
            <person name="Fuhrmann J.L."/>
            <person name="Nguyen D.T."/>
            <person name="Utterback T.R."/>
            <person name="Saudek D.M."/>
            <person name="Phillips C.A."/>
            <person name="Merrick J.M."/>
            <person name="Tomb J.-F."/>
            <person name="Dougherty B.A."/>
            <person name="Bott K.F."/>
            <person name="Hu P.-C."/>
            <person name="Lucier T.S."/>
            <person name="Peterson S.N."/>
            <person name="Smith H.O."/>
            <person name="Hutchison C.A. III"/>
            <person name="Venter J.C."/>
        </authorList>
    </citation>
    <scope>NUCLEOTIDE SEQUENCE [LARGE SCALE GENOMIC DNA]</scope>
    <source>
        <strain>ATCC 33530 / DSM 19775 / NCTC 10195 / G37</strain>
    </source>
</reference>
<reference key="2">
    <citation type="journal article" date="1993" name="J. Bacteriol.">
        <title>A survey of the Mycoplasma genitalium genome by using random sequencing.</title>
        <authorList>
            <person name="Peterson S.N."/>
            <person name="Hu P.-C."/>
            <person name="Bott K.F."/>
            <person name="Hutchison C.A. III"/>
        </authorList>
    </citation>
    <scope>NUCLEOTIDE SEQUENCE [GENOMIC DNA] OF 170-256</scope>
    <source>
        <strain>ATCC 33530 / DSM 19775 / NCTC 10195 / G37</strain>
    </source>
</reference>
<reference key="3">
    <citation type="journal article" date="2006" name="Proc. Natl. Acad. Sci. U.S.A.">
        <title>Essential genes of a minimal bacterium.</title>
        <authorList>
            <person name="Glass J.I."/>
            <person name="Assad-Garcia N."/>
            <person name="Alperovich N."/>
            <person name="Yooseph S."/>
            <person name="Lewis M.R."/>
            <person name="Maruf M."/>
            <person name="Hutchison C.A. III"/>
            <person name="Smith H.O."/>
            <person name="Venter J.C."/>
        </authorList>
    </citation>
    <scope>SEQUENCE REVISION</scope>
    <scope>DISRUPTION PHENOTYPE</scope>
    <source>
        <strain>ATCC 33530 / DSM 19775 / NCTC 10195 / G37</strain>
    </source>
</reference>
<dbReference type="EC" id="2.7.1.56" evidence="2"/>
<dbReference type="EMBL" id="L43967">
    <property type="protein sequence ID" value="AAC71280.2"/>
    <property type="molecule type" value="Genomic_DNA"/>
</dbReference>
<dbReference type="EMBL" id="U01777">
    <property type="protein sequence ID" value="AAD10597.1"/>
    <property type="molecule type" value="Genomic_DNA"/>
</dbReference>
<dbReference type="RefSeq" id="WP_010869313.1">
    <property type="nucleotide sequence ID" value="NC_000908.2"/>
</dbReference>
<dbReference type="SMR" id="Q49396"/>
<dbReference type="FunCoup" id="Q49396">
    <property type="interactions" value="9"/>
</dbReference>
<dbReference type="STRING" id="243273.MG_063"/>
<dbReference type="GeneID" id="88282181"/>
<dbReference type="KEGG" id="mge:MG_063"/>
<dbReference type="eggNOG" id="COG1105">
    <property type="taxonomic scope" value="Bacteria"/>
</dbReference>
<dbReference type="HOGENOM" id="CLU_050013_1_0_14"/>
<dbReference type="InParanoid" id="Q49396"/>
<dbReference type="OrthoDB" id="9801219at2"/>
<dbReference type="Proteomes" id="UP000000807">
    <property type="component" value="Chromosome"/>
</dbReference>
<dbReference type="GO" id="GO:0005829">
    <property type="term" value="C:cytosol"/>
    <property type="evidence" value="ECO:0000318"/>
    <property type="project" value="GO_Central"/>
</dbReference>
<dbReference type="GO" id="GO:0008662">
    <property type="term" value="F:1-phosphofructokinase activity"/>
    <property type="evidence" value="ECO:0007669"/>
    <property type="project" value="UniProtKB-EC"/>
</dbReference>
<dbReference type="GO" id="GO:0005524">
    <property type="term" value="F:ATP binding"/>
    <property type="evidence" value="ECO:0007669"/>
    <property type="project" value="UniProtKB-KW"/>
</dbReference>
<dbReference type="GO" id="GO:0008443">
    <property type="term" value="F:phosphofructokinase activity"/>
    <property type="evidence" value="ECO:0000318"/>
    <property type="project" value="GO_Central"/>
</dbReference>
<dbReference type="CDD" id="cd01164">
    <property type="entry name" value="FruK_PfkB_like"/>
    <property type="match status" value="1"/>
</dbReference>
<dbReference type="Gene3D" id="3.40.1190.20">
    <property type="match status" value="1"/>
</dbReference>
<dbReference type="InterPro" id="IPR002173">
    <property type="entry name" value="Carboh/pur_kinase_PfkB_CS"/>
</dbReference>
<dbReference type="InterPro" id="IPR011611">
    <property type="entry name" value="PfkB_dom"/>
</dbReference>
<dbReference type="InterPro" id="IPR029056">
    <property type="entry name" value="Ribokinase-like"/>
</dbReference>
<dbReference type="InterPro" id="IPR017583">
    <property type="entry name" value="Tagatose/fructose_Pkinase"/>
</dbReference>
<dbReference type="PANTHER" id="PTHR46566:SF1">
    <property type="entry name" value="1-PHOSPHOFRUCTOKINASE"/>
    <property type="match status" value="1"/>
</dbReference>
<dbReference type="PANTHER" id="PTHR46566">
    <property type="entry name" value="1-PHOSPHOFRUCTOKINASE-RELATED"/>
    <property type="match status" value="1"/>
</dbReference>
<dbReference type="Pfam" id="PF00294">
    <property type="entry name" value="PfkB"/>
    <property type="match status" value="1"/>
</dbReference>
<dbReference type="PIRSF" id="PIRSF000535">
    <property type="entry name" value="1PFK/6PFK/LacC"/>
    <property type="match status" value="1"/>
</dbReference>
<dbReference type="SUPFAM" id="SSF53613">
    <property type="entry name" value="Ribokinase-like"/>
    <property type="match status" value="1"/>
</dbReference>
<dbReference type="PROSITE" id="PS00583">
    <property type="entry name" value="PFKB_KINASES_1"/>
    <property type="match status" value="1"/>
</dbReference>
<proteinExistence type="inferred from homology"/>